<gene>
    <name type="primary">xylQ</name>
</gene>
<proteinExistence type="inferred from homology"/>
<evidence type="ECO:0000255" key="1">
    <source>
        <dbReference type="HAMAP-Rule" id="MF_01657"/>
    </source>
</evidence>
<comment type="catalytic activity">
    <reaction evidence="1">
        <text>acetaldehyde + NAD(+) + CoA = acetyl-CoA + NADH + H(+)</text>
        <dbReference type="Rhea" id="RHEA:23288"/>
        <dbReference type="ChEBI" id="CHEBI:15343"/>
        <dbReference type="ChEBI" id="CHEBI:15378"/>
        <dbReference type="ChEBI" id="CHEBI:57287"/>
        <dbReference type="ChEBI" id="CHEBI:57288"/>
        <dbReference type="ChEBI" id="CHEBI:57540"/>
        <dbReference type="ChEBI" id="CHEBI:57945"/>
        <dbReference type="EC" id="1.2.1.10"/>
    </reaction>
</comment>
<comment type="similarity">
    <text evidence="1">Belongs to the acetaldehyde dehydrogenase family.</text>
</comment>
<organism>
    <name type="scientific">Novosphingobium aromaticivorans</name>
    <name type="common">Sphingomonas aromaticivorans</name>
    <dbReference type="NCBI Taxonomy" id="48935"/>
    <lineage>
        <taxon>Bacteria</taxon>
        <taxon>Pseudomonadati</taxon>
        <taxon>Pseudomonadota</taxon>
        <taxon>Alphaproteobacteria</taxon>
        <taxon>Sphingomonadales</taxon>
        <taxon>Sphingomonadaceae</taxon>
        <taxon>Novosphingobium</taxon>
    </lineage>
</organism>
<keyword id="KW-0058">Aromatic hydrocarbons catabolism</keyword>
<keyword id="KW-0520">NAD</keyword>
<keyword id="KW-0560">Oxidoreductase</keyword>
<keyword id="KW-0614">Plasmid</keyword>
<dbReference type="EC" id="1.2.1.10" evidence="1"/>
<dbReference type="EMBL" id="AF079317">
    <property type="protein sequence ID" value="AAD03994.1"/>
    <property type="molecule type" value="Genomic_DNA"/>
</dbReference>
<dbReference type="PIR" id="T31270">
    <property type="entry name" value="T31270"/>
</dbReference>
<dbReference type="RefSeq" id="NP_049198.1">
    <property type="nucleotide sequence ID" value="NC_002033.1"/>
</dbReference>
<dbReference type="RefSeq" id="WP_010891016.1">
    <property type="nucleotide sequence ID" value="NC_002033.1"/>
</dbReference>
<dbReference type="SMR" id="O85978"/>
<dbReference type="OMA" id="VRYMVGV"/>
<dbReference type="OrthoDB" id="9786743at2"/>
<dbReference type="GO" id="GO:0008774">
    <property type="term" value="F:acetaldehyde dehydrogenase (acetylating) activity"/>
    <property type="evidence" value="ECO:0007669"/>
    <property type="project" value="UniProtKB-UniRule"/>
</dbReference>
<dbReference type="GO" id="GO:0051287">
    <property type="term" value="F:NAD binding"/>
    <property type="evidence" value="ECO:0007669"/>
    <property type="project" value="UniProtKB-UniRule"/>
</dbReference>
<dbReference type="GO" id="GO:0009056">
    <property type="term" value="P:catabolic process"/>
    <property type="evidence" value="ECO:0007669"/>
    <property type="project" value="UniProtKB-KW"/>
</dbReference>
<dbReference type="CDD" id="cd23933">
    <property type="entry name" value="ALDH_C"/>
    <property type="match status" value="1"/>
</dbReference>
<dbReference type="Gene3D" id="3.30.360.10">
    <property type="entry name" value="Dihydrodipicolinate Reductase, domain 2"/>
    <property type="match status" value="1"/>
</dbReference>
<dbReference type="Gene3D" id="3.40.50.720">
    <property type="entry name" value="NAD(P)-binding Rossmann-like Domain"/>
    <property type="match status" value="1"/>
</dbReference>
<dbReference type="HAMAP" id="MF_01657">
    <property type="entry name" value="Ac_ald_DH_ac"/>
    <property type="match status" value="1"/>
</dbReference>
<dbReference type="InterPro" id="IPR003361">
    <property type="entry name" value="Acetaldehyde_dehydrogenase"/>
</dbReference>
<dbReference type="InterPro" id="IPR015426">
    <property type="entry name" value="Acetylaldehyde_DH_C"/>
</dbReference>
<dbReference type="InterPro" id="IPR036291">
    <property type="entry name" value="NAD(P)-bd_dom_sf"/>
</dbReference>
<dbReference type="InterPro" id="IPR000534">
    <property type="entry name" value="Semialdehyde_DH_NAD-bd"/>
</dbReference>
<dbReference type="NCBIfam" id="TIGR03215">
    <property type="entry name" value="ac_ald_DH_ac"/>
    <property type="match status" value="1"/>
</dbReference>
<dbReference type="NCBIfam" id="NF006157">
    <property type="entry name" value="PRK08300.1"/>
    <property type="match status" value="1"/>
</dbReference>
<dbReference type="Pfam" id="PF09290">
    <property type="entry name" value="AcetDehyd-dimer"/>
    <property type="match status" value="1"/>
</dbReference>
<dbReference type="PIRSF" id="PIRSF015689">
    <property type="entry name" value="Actaldh_dh_actl"/>
    <property type="match status" value="1"/>
</dbReference>
<dbReference type="SMART" id="SM00859">
    <property type="entry name" value="Semialdhyde_dh"/>
    <property type="match status" value="1"/>
</dbReference>
<dbReference type="SUPFAM" id="SSF55347">
    <property type="entry name" value="Glyceraldehyde-3-phosphate dehydrogenase-like, C-terminal domain"/>
    <property type="match status" value="1"/>
</dbReference>
<dbReference type="SUPFAM" id="SSF51735">
    <property type="entry name" value="NAD(P)-binding Rossmann-fold domains"/>
    <property type="match status" value="1"/>
</dbReference>
<name>ACDH_NOVAR</name>
<reference key="1">
    <citation type="journal article" date="1999" name="J. Bacteriol.">
        <title>Complete sequence of a 184-kilobase catabolic plasmid from Sphingomonas aromaticivorans F199.</title>
        <authorList>
            <person name="Romine M.F."/>
            <person name="Stillwell L.C."/>
            <person name="Wong K.-K."/>
            <person name="Thurston S.J."/>
            <person name="Sisk E.C."/>
            <person name="Sensen C."/>
            <person name="Gaasterland T."/>
            <person name="Fredrickson J.K."/>
            <person name="Saffer J.D."/>
        </authorList>
    </citation>
    <scope>NUCLEOTIDE SEQUENCE [GENOMIC DNA]</scope>
    <source>
        <strain>ATCC 700278 / DSM 12444 / F199</strain>
    </source>
</reference>
<feature type="chain" id="PRO_0000387742" description="Acetaldehyde dehydrogenase">
    <location>
        <begin position="1"/>
        <end position="312"/>
    </location>
</feature>
<feature type="active site" description="Acyl-thioester intermediate" evidence="1">
    <location>
        <position position="129"/>
    </location>
</feature>
<feature type="binding site" evidence="1">
    <location>
        <begin position="11"/>
        <end position="14"/>
    </location>
    <ligand>
        <name>NAD(+)</name>
        <dbReference type="ChEBI" id="CHEBI:57540"/>
    </ligand>
</feature>
<feature type="binding site" evidence="1">
    <location>
        <begin position="160"/>
        <end position="168"/>
    </location>
    <ligand>
        <name>NAD(+)</name>
        <dbReference type="ChEBI" id="CHEBI:57540"/>
    </ligand>
</feature>
<feature type="binding site" evidence="1">
    <location>
        <position position="287"/>
    </location>
    <ligand>
        <name>NAD(+)</name>
        <dbReference type="ChEBI" id="CHEBI:57540"/>
    </ligand>
</feature>
<sequence length="312" mass="32847">MAKMKCAIIGSGNIGTDLMIKLLKGSDTLELAAVVGIDPASEGLAMASERGVPTTHEGIEGLCRMPQYADIGIAFDATSAYAHKAHDEILARDGKLMVDLTPAAIGPATIPPVNPAVDAAVRNINMVTCGGQATIPIVAAVSQVAKVHYAEIVASVSSRSAGPGTRANIDEFTRTTARAIETVGGAAKGRAVIILNPAEPPMIMRDTIFTLSEMVDEDKVRDSVLAMIARVQSYVPGYRLKQEVQFERFGSNRPLKIPGYGEFEGLKTSVFLEVEGAGDYLPNYSGNLDIMTAAAKAAGESLAKTHMEKTAA</sequence>
<accession>O85978</accession>
<geneLocation type="plasmid">
    <name>pNL1</name>
</geneLocation>
<protein>
    <recommendedName>
        <fullName evidence="1">Acetaldehyde dehydrogenase</fullName>
        <ecNumber evidence="1">1.2.1.10</ecNumber>
    </recommendedName>
    <alternativeName>
        <fullName evidence="1">Acetaldehyde dehydrogenase [acetylating]</fullName>
    </alternativeName>
</protein>